<protein>
    <recommendedName>
        <fullName evidence="1">Phosphate acyltransferase</fullName>
        <ecNumber evidence="1">2.3.1.274</ecNumber>
    </recommendedName>
    <alternativeName>
        <fullName evidence="1">Acyl-ACP phosphotransacylase</fullName>
    </alternativeName>
    <alternativeName>
        <fullName evidence="1">Acyl-[acyl-carrier-protein]--phosphate acyltransferase</fullName>
    </alternativeName>
    <alternativeName>
        <fullName evidence="1">Phosphate-acyl-ACP acyltransferase</fullName>
    </alternativeName>
</protein>
<keyword id="KW-0963">Cytoplasm</keyword>
<keyword id="KW-0444">Lipid biosynthesis</keyword>
<keyword id="KW-0443">Lipid metabolism</keyword>
<keyword id="KW-0594">Phospholipid biosynthesis</keyword>
<keyword id="KW-1208">Phospholipid metabolism</keyword>
<keyword id="KW-0808">Transferase</keyword>
<feature type="chain" id="PRO_1000193128" description="Phosphate acyltransferase">
    <location>
        <begin position="1"/>
        <end position="346"/>
    </location>
</feature>
<accession>C0RIB2</accession>
<comment type="function">
    <text evidence="1">Catalyzes the reversible formation of acyl-phosphate (acyl-PO(4)) from acyl-[acyl-carrier-protein] (acyl-ACP). This enzyme utilizes acyl-ACP as fatty acyl donor, but not acyl-CoA.</text>
</comment>
<comment type="catalytic activity">
    <reaction evidence="1">
        <text>a fatty acyl-[ACP] + phosphate = an acyl phosphate + holo-[ACP]</text>
        <dbReference type="Rhea" id="RHEA:42292"/>
        <dbReference type="Rhea" id="RHEA-COMP:9685"/>
        <dbReference type="Rhea" id="RHEA-COMP:14125"/>
        <dbReference type="ChEBI" id="CHEBI:43474"/>
        <dbReference type="ChEBI" id="CHEBI:59918"/>
        <dbReference type="ChEBI" id="CHEBI:64479"/>
        <dbReference type="ChEBI" id="CHEBI:138651"/>
        <dbReference type="EC" id="2.3.1.274"/>
    </reaction>
</comment>
<comment type="pathway">
    <text evidence="1">Lipid metabolism; phospholipid metabolism.</text>
</comment>
<comment type="subunit">
    <text evidence="1">Homodimer. Probably interacts with PlsY.</text>
</comment>
<comment type="subcellular location">
    <subcellularLocation>
        <location evidence="1">Cytoplasm</location>
    </subcellularLocation>
    <text evidence="1">Associated with the membrane possibly through PlsY.</text>
</comment>
<comment type="similarity">
    <text evidence="1">Belongs to the PlsX family.</text>
</comment>
<evidence type="ECO:0000255" key="1">
    <source>
        <dbReference type="HAMAP-Rule" id="MF_00019"/>
    </source>
</evidence>
<proteinExistence type="inferred from homology"/>
<reference key="1">
    <citation type="submission" date="2009-03" db="EMBL/GenBank/DDBJ databases">
        <title>Brucella melitensis ATCC 23457 whole genome shotgun sequencing project.</title>
        <authorList>
            <person name="Setubal J.C."/>
            <person name="Boyle S."/>
            <person name="Crasta O.R."/>
            <person name="Gillespie J.J."/>
            <person name="Kenyon R.W."/>
            <person name="Lu J."/>
            <person name="Mane S."/>
            <person name="Nagrani S."/>
            <person name="Shallom J.M."/>
            <person name="Shallom S."/>
            <person name="Shukla M."/>
            <person name="Snyder E.E."/>
            <person name="Sobral B.W."/>
            <person name="Wattam A.R."/>
            <person name="Will R."/>
            <person name="Williams K."/>
            <person name="Yoo H."/>
            <person name="Munk C."/>
            <person name="Tapia R."/>
            <person name="Han C."/>
            <person name="Detter J.C."/>
            <person name="Bruce D."/>
            <person name="Brettin T.S."/>
        </authorList>
    </citation>
    <scope>NUCLEOTIDE SEQUENCE [LARGE SCALE GENOMIC DNA]</scope>
    <source>
        <strain>ATCC 23457</strain>
    </source>
</reference>
<gene>
    <name evidence="1" type="primary">plsX</name>
    <name type="ordered locus">BMEA_A0814</name>
</gene>
<dbReference type="EC" id="2.3.1.274" evidence="1"/>
<dbReference type="EMBL" id="CP001488">
    <property type="protein sequence ID" value="ACO00570.1"/>
    <property type="molecule type" value="Genomic_DNA"/>
</dbReference>
<dbReference type="RefSeq" id="WP_004683580.1">
    <property type="nucleotide sequence ID" value="NC_012441.1"/>
</dbReference>
<dbReference type="SMR" id="C0RIB2"/>
<dbReference type="GeneID" id="29594024"/>
<dbReference type="KEGG" id="bmi:BMEA_A0814"/>
<dbReference type="HOGENOM" id="CLU_039379_1_0_5"/>
<dbReference type="UniPathway" id="UPA00085"/>
<dbReference type="Proteomes" id="UP000001748">
    <property type="component" value="Chromosome I"/>
</dbReference>
<dbReference type="GO" id="GO:0005737">
    <property type="term" value="C:cytoplasm"/>
    <property type="evidence" value="ECO:0007669"/>
    <property type="project" value="UniProtKB-SubCell"/>
</dbReference>
<dbReference type="GO" id="GO:0043811">
    <property type="term" value="F:phosphate:acyl-[acyl carrier protein] acyltransferase activity"/>
    <property type="evidence" value="ECO:0007669"/>
    <property type="project" value="UniProtKB-UniRule"/>
</dbReference>
<dbReference type="GO" id="GO:0006633">
    <property type="term" value="P:fatty acid biosynthetic process"/>
    <property type="evidence" value="ECO:0007669"/>
    <property type="project" value="UniProtKB-UniRule"/>
</dbReference>
<dbReference type="GO" id="GO:0008654">
    <property type="term" value="P:phospholipid biosynthetic process"/>
    <property type="evidence" value="ECO:0007669"/>
    <property type="project" value="UniProtKB-KW"/>
</dbReference>
<dbReference type="Gene3D" id="3.40.718.10">
    <property type="entry name" value="Isopropylmalate Dehydrogenase"/>
    <property type="match status" value="1"/>
</dbReference>
<dbReference type="HAMAP" id="MF_00019">
    <property type="entry name" value="PlsX"/>
    <property type="match status" value="1"/>
</dbReference>
<dbReference type="InterPro" id="IPR003664">
    <property type="entry name" value="FA_synthesis"/>
</dbReference>
<dbReference type="InterPro" id="IPR012281">
    <property type="entry name" value="Phospholipid_synth_PlsX-like"/>
</dbReference>
<dbReference type="NCBIfam" id="TIGR00182">
    <property type="entry name" value="plsX"/>
    <property type="match status" value="1"/>
</dbReference>
<dbReference type="PANTHER" id="PTHR30100">
    <property type="entry name" value="FATTY ACID/PHOSPHOLIPID SYNTHESIS PROTEIN PLSX"/>
    <property type="match status" value="1"/>
</dbReference>
<dbReference type="PANTHER" id="PTHR30100:SF1">
    <property type="entry name" value="PHOSPHATE ACYLTRANSFERASE"/>
    <property type="match status" value="1"/>
</dbReference>
<dbReference type="Pfam" id="PF02504">
    <property type="entry name" value="FA_synthesis"/>
    <property type="match status" value="1"/>
</dbReference>
<dbReference type="PIRSF" id="PIRSF002465">
    <property type="entry name" value="Phsphlp_syn_PlsX"/>
    <property type="match status" value="1"/>
</dbReference>
<dbReference type="SUPFAM" id="SSF53659">
    <property type="entry name" value="Isocitrate/Isopropylmalate dehydrogenase-like"/>
    <property type="match status" value="1"/>
</dbReference>
<name>PLSX_BRUMB</name>
<sequence>MIKISIDAMGGDFGPEVVIPGAAKAFERHPDIRFIFFGLPAQVEPVLARYPKLKEASEFRASEVAIGMDDKPSQALRAGRGKSSMWQAIEAVKTGDADACVSAGNTGALMAMSKFCLRMMSDVERPAIAGIWPTLRGESIVLDIGATIGADARQLVDYAVMGAGMARALFEVRKPTVGLLNVGTEEVKGLDEIKEAGQILRDTPLDGLEYSGFVEGNDIGKGTVDAVVTEGFTGNIALKTAEGTARQMAELLRQAMSRTLLAKIGYVFAKGAFDRLREKMDPNKVNGGVFLGLSGIVIKSHGGANAEGFCSAVEVGYDMVRNRLLEKIEADLAHFHHSHSHVSSKA</sequence>
<organism>
    <name type="scientific">Brucella melitensis biotype 2 (strain ATCC 23457)</name>
    <dbReference type="NCBI Taxonomy" id="546272"/>
    <lineage>
        <taxon>Bacteria</taxon>
        <taxon>Pseudomonadati</taxon>
        <taxon>Pseudomonadota</taxon>
        <taxon>Alphaproteobacteria</taxon>
        <taxon>Hyphomicrobiales</taxon>
        <taxon>Brucellaceae</taxon>
        <taxon>Brucella/Ochrobactrum group</taxon>
        <taxon>Brucella</taxon>
    </lineage>
</organism>